<proteinExistence type="evidence at protein level"/>
<sequence>MPPMLSGLLARLVKLLLGRHGSALHWRAAGAATVLLVIVLLAGSYLAVLAERGAPGAQLITYPRALWWSVETATTVGYGDLYPVTLWGRLVAVVVMVAGITSFGLVTAALATWFVGREQERRGHFVRHSEKAAEEAYTRTTRALHERFDRLERMLDDNRR</sequence>
<accession>P0A334</accession>
<accession>Q54397</accession>
<evidence type="ECO:0000269" key="1">
    <source>
    </source>
</evidence>
<evidence type="ECO:0000269" key="2">
    <source>
    </source>
</evidence>
<evidence type="ECO:0000269" key="3">
    <source>
    </source>
</evidence>
<evidence type="ECO:0000269" key="4">
    <source>
    </source>
</evidence>
<evidence type="ECO:0000305" key="5"/>
<evidence type="ECO:0007829" key="6">
    <source>
        <dbReference type="PDB" id="1BL8"/>
    </source>
</evidence>
<evidence type="ECO:0007829" key="7">
    <source>
        <dbReference type="PDB" id="2IH3"/>
    </source>
</evidence>
<evidence type="ECO:0007829" key="8">
    <source>
        <dbReference type="PDB" id="3OR7"/>
    </source>
</evidence>
<protein>
    <recommendedName>
        <fullName>pH-gated potassium channel KcsA</fullName>
    </recommendedName>
    <alternativeName>
        <fullName>Streptomyces lividans K+ channel</fullName>
        <shortName>SKC1</shortName>
    </alternativeName>
</protein>
<gene>
    <name type="primary">kcsA</name>
    <name type="synonym">skc1</name>
</gene>
<reference key="1">
    <citation type="journal article" date="1995" name="EMBO J.">
        <title>A prokaryotic potassium ion channel with two predicted transmembrane segments from Streptomyces lividans.</title>
        <authorList>
            <person name="Schrempf H."/>
            <person name="Schmidt O."/>
            <person name="Kuemmerlen R."/>
            <person name="Hinnah S."/>
            <person name="Mueller D."/>
            <person name="Betzler M."/>
            <person name="Steinkamp T."/>
            <person name="Wagner R."/>
        </authorList>
    </citation>
    <scope>NUCLEOTIDE SEQUENCE [GENOMIC DNA]</scope>
    <scope>FUNCTION AS A K(+) CHANNEL</scope>
    <scope>DISRUPTION PHENOTYPE</scope>
    <source>
        <strain>66 / 1326</strain>
    </source>
</reference>
<reference key="2">
    <citation type="journal article" date="1998" name="Biochemistry">
        <title>pH-dependent gating in the Streptomyces lividans K+ channel.</title>
        <authorList>
            <person name="Cuello L.G."/>
            <person name="Romero J.G."/>
            <person name="Cortes D.M."/>
            <person name="Perozo E."/>
        </authorList>
    </citation>
    <scope>PH-GATING</scope>
    <scope>SUBSTRATE SPECIFICITY</scope>
    <scope>POSSIBLE TOPOLOGY</scope>
</reference>
<reference key="3">
    <citation type="journal article" date="2000" name="Biochemistry">
        <title>Proteomics on full-length membrane proteins using mass spectrometry.</title>
        <authorList>
            <person name="le Coutre J."/>
            <person name="Whitelegge J.P."/>
            <person name="Gross A."/>
            <person name="Turk E."/>
            <person name="Wright E.M."/>
            <person name="Kaback H.R."/>
            <person name="Faull K.F."/>
        </authorList>
    </citation>
    <scope>IDENTIFICATION BY MASS SPECTROMETRY</scope>
</reference>
<reference key="4">
    <citation type="journal article" date="2010" name="J. Biol. Chem.">
        <title>Rearrangements in the KcsA cytoplasmic domain underlie its gating.</title>
        <authorList>
            <person name="Hirano M."/>
            <person name="Takeuchi Y."/>
            <person name="Aoki T."/>
            <person name="Yanagida T."/>
            <person name="Ide T."/>
        </authorList>
    </citation>
    <scope>GATING MECHANISM</scope>
    <scope>MUTAGENESIS OF GLU-71</scope>
</reference>
<reference key="5">
    <citation type="journal article" date="1998" name="Structure">
        <title>Single potassium ion seeks open channel for transmembrane travels: tales from the KcsA structure.</title>
        <authorList>
            <person name="Gouaux E."/>
        </authorList>
    </citation>
    <scope>REVIEW</scope>
</reference>
<reference key="6">
    <citation type="journal article" date="1998" name="Science">
        <title>The structure of the potassium channel: molecular basis of K+ conduction and selectivity.</title>
        <authorList>
            <person name="Doyle D.A."/>
            <person name="Morais Cabral J."/>
            <person name="Pfuetzner R.A."/>
            <person name="Kuo A."/>
            <person name="Gulbis J.M."/>
            <person name="Cohen S.L."/>
            <person name="Chait B.T."/>
            <person name="McKinnon R."/>
        </authorList>
    </citation>
    <scope>X-RAY CRYSTALLOGRAPHY (3.2 ANGSTROMS)</scope>
    <scope>SUBUNIT</scope>
</reference>
<reference key="7">
    <citation type="journal article" date="2001" name="J. Gen. Physiol.">
        <title>Molecular architecture of full-length KcsA: role of cytoplasmic domains in ion permeation and activation gating.</title>
        <authorList>
            <person name="Cortes D.M."/>
            <person name="Cuello L.G."/>
            <person name="Perozo E."/>
        </authorList>
    </citation>
    <scope>STRUCTURE BY NMR OF 1-160</scope>
    <scope>EPR SPECTROSCOPY</scope>
</reference>
<reference key="8">
    <citation type="journal article" date="2001" name="Nat. Struct. Biol.">
        <title>Structure of the KcsA channel intracellular gate in the open state.</title>
        <authorList>
            <person name="Liu Y.-S."/>
            <person name="Sompornpisut P."/>
            <person name="Perozo E."/>
        </authorList>
    </citation>
    <scope>STRUCTURE BY NMR OF 86-119</scope>
    <scope>EPR SPECTROSCOPY</scope>
</reference>
<reference key="9">
    <citation type="journal article" date="2001" name="Nature">
        <title>Energetic optimization of ion conduction rate by the K+ selectivity filter.</title>
        <authorList>
            <person name="Morais-Cabral J.H."/>
            <person name="Zhou Y."/>
            <person name="MacKinnon R."/>
        </authorList>
    </citation>
    <scope>X-RAY CRYSTALLOGRAPHY (2.8 ANGSTROMS) OF 5-124</scope>
    <scope>TETRAMERIZATION</scope>
    <scope>POTASSIUM-BINDING</scope>
</reference>
<reference key="10">
    <citation type="journal article" date="2001" name="Nature">
        <title>Chemistry of ion coordination and hydration revealed by a K+ channel-Fab complex at 2.0 A resolution.</title>
        <authorList>
            <person name="Zhou Y."/>
            <person name="Morais-Cabral J.H."/>
            <person name="Kaufman A."/>
            <person name="MacKinnon R."/>
        </authorList>
    </citation>
    <scope>X-RAY CRYSTALLOGRAPHY (2.0 ANGSTROMS) OF 5-124 IN COMPLEX WITH ANTIBODY</scope>
    <scope>POTASSIUM-BINDING</scope>
    <scope>TETRAMERIZATION</scope>
</reference>
<reference key="11">
    <citation type="journal article" date="2009" name="Proc. Natl. Acad. Sci. U.S.A.">
        <title>Crystal structure of full-length KcsA in its closed conformation.</title>
        <authorList>
            <person name="Uysal S."/>
            <person name="Vasquez V."/>
            <person name="Tereshko V."/>
            <person name="Esaki K."/>
            <person name="Fellouse F.A."/>
            <person name="Sidhu S.S."/>
            <person name="Koide S."/>
            <person name="Perozo E."/>
            <person name="Kossiakoff A."/>
        </authorList>
    </citation>
    <scope>X-RAY CRYSTALLOGRAPHY (3.8 ANGSTROMS) OF 22-160 IN THE CLOSED CONFORMATION</scope>
</reference>
<reference key="12">
    <citation type="journal article" date="2011" name="Proc. Natl. Acad. Sci. U.S.A.">
        <title>Mechanism of activation gating in the full-length KcsA K+ channel.</title>
        <authorList>
            <person name="Uysal S."/>
            <person name="Cuello L.G."/>
            <person name="Cortes D.M."/>
            <person name="Koide S."/>
            <person name="Kossiakoff A.A."/>
            <person name="Perozo E."/>
        </authorList>
    </citation>
    <scope>X-RAY CRYSTALLOGRAPHY (3.8 ANGSTROMS) OF 2-160 IN THE OPEN CONFIGURATION</scope>
</reference>
<name>KCSA_STRLI</name>
<feature type="chain" id="PRO_0000054102" description="pH-gated potassium channel KcsA">
    <location>
        <begin position="1"/>
        <end position="160"/>
    </location>
</feature>
<feature type="topological domain" description="Cytoplasmic">
    <location>
        <begin position="1"/>
        <end position="27"/>
    </location>
</feature>
<feature type="transmembrane region" description="Helical">
    <location>
        <begin position="28"/>
        <end position="50"/>
    </location>
</feature>
<feature type="topological domain" description="Extracellular">
    <location>
        <begin position="51"/>
        <end position="61"/>
    </location>
</feature>
<feature type="intramembrane region" description="Helical; Pore-forming">
    <location>
        <begin position="62"/>
        <end position="72"/>
    </location>
</feature>
<feature type="intramembrane region" description="Pore-forming">
    <location>
        <begin position="73"/>
        <end position="80"/>
    </location>
</feature>
<feature type="topological domain" description="Extracellular">
    <location>
        <begin position="81"/>
        <end position="87"/>
    </location>
</feature>
<feature type="transmembrane region" description="Helical">
    <location>
        <begin position="88"/>
        <end position="111"/>
    </location>
</feature>
<feature type="topological domain" description="Cytoplasmic">
    <location>
        <begin position="112"/>
        <end position="160"/>
    </location>
</feature>
<feature type="short sequence motif" description="Selectivity filter">
    <location>
        <begin position="75"/>
        <end position="80"/>
    </location>
</feature>
<feature type="mutagenesis site" description="Prevents channel inactivation." evidence="2">
    <original>E</original>
    <variation>A</variation>
    <location>
        <position position="71"/>
    </location>
</feature>
<feature type="helix" evidence="7">
    <location>
        <begin position="25"/>
        <end position="51"/>
    </location>
</feature>
<feature type="strand" evidence="6">
    <location>
        <begin position="52"/>
        <end position="55"/>
    </location>
</feature>
<feature type="helix" evidence="7">
    <location>
        <begin position="62"/>
        <end position="73"/>
    </location>
</feature>
<feature type="strand" evidence="7">
    <location>
        <begin position="79"/>
        <end position="81"/>
    </location>
</feature>
<feature type="helix" evidence="7">
    <location>
        <begin position="86"/>
        <end position="120"/>
    </location>
</feature>
<feature type="turn" evidence="8">
    <location>
        <begin position="121"/>
        <end position="123"/>
    </location>
</feature>
<comment type="function">
    <text evidence="3">Acts as a pH-gated potassium ion channel; changing the cytosolic pH from 7 to 4 opens the channel, although it is not clear if this is the physiological stimulus for channel opening. Monovalent cation preference is K(+) &gt; Rb(+) &gt; NH4(+) &gt;&gt; Na(+) &gt; Li(+).</text>
</comment>
<comment type="subunit">
    <text evidence="1 4">Homotetramer.</text>
</comment>
<comment type="interaction">
    <interactant intactId="EBI-7262059">
        <id>P0A334</id>
    </interactant>
    <interactant intactId="EBI-7262059">
        <id>P0A334</id>
        <label>kcsA</label>
    </interactant>
    <organismsDiffer>false</organismsDiffer>
    <experiments>37</experiments>
</comment>
<comment type="subcellular location">
    <subcellularLocation>
        <location>Cell membrane</location>
        <topology>Multi-pass membrane protein</topology>
    </subcellularLocation>
</comment>
<comment type="domain">
    <text>The cytoplasmic C-terminus is involved in the gating mechanism.</text>
</comment>
<comment type="disruption phenotype">
    <text evidence="3">Cells grow slower and to lower myceliar densities.</text>
</comment>
<comment type="miscellaneous">
    <text>The amino acids 62-79 are situated in the membrane and are important for channel structure and properties.</text>
</comment>
<comment type="similarity">
    <text evidence="5">Belongs to the potassium channel family.</text>
</comment>
<keyword id="KW-0002">3D-structure</keyword>
<keyword id="KW-1003">Cell membrane</keyword>
<keyword id="KW-0407">Ion channel</keyword>
<keyword id="KW-0406">Ion transport</keyword>
<keyword id="KW-1071">Ligand-gated ion channel</keyword>
<keyword id="KW-0472">Membrane</keyword>
<keyword id="KW-0812">Transmembrane</keyword>
<keyword id="KW-1133">Transmembrane helix</keyword>
<keyword id="KW-0813">Transport</keyword>
<dbReference type="EMBL" id="Z37969">
    <property type="protein sequence ID" value="CAA86025.1"/>
    <property type="molecule type" value="Genomic_DNA"/>
</dbReference>
<dbReference type="PIR" id="S60172">
    <property type="entry name" value="S60172"/>
</dbReference>
<dbReference type="PDB" id="1BL8">
    <property type="method" value="X-ray"/>
    <property type="resolution" value="3.20 A"/>
    <property type="chains" value="A/B/C/D=23-119"/>
</dbReference>
<dbReference type="PDB" id="1F6G">
    <property type="method" value="NMR"/>
    <property type="chains" value="A/B/C/D=1-160"/>
</dbReference>
<dbReference type="PDB" id="1J95">
    <property type="method" value="X-ray"/>
    <property type="resolution" value="2.80 A"/>
    <property type="chains" value="A/B/C/D=1-125"/>
</dbReference>
<dbReference type="PDB" id="1JQ1">
    <property type="method" value="NMR"/>
    <property type="chains" value="A/B/C/D=86-119"/>
</dbReference>
<dbReference type="PDB" id="1JQ2">
    <property type="method" value="NMR"/>
    <property type="chains" value="A/B/C/D=86-119"/>
</dbReference>
<dbReference type="PDB" id="1JVM">
    <property type="method" value="X-ray"/>
    <property type="resolution" value="2.80 A"/>
    <property type="chains" value="A/B/C/D=1-125"/>
</dbReference>
<dbReference type="PDB" id="1K4C">
    <property type="method" value="X-ray"/>
    <property type="resolution" value="2.00 A"/>
    <property type="chains" value="C=1-124"/>
</dbReference>
<dbReference type="PDB" id="1K4D">
    <property type="method" value="X-ray"/>
    <property type="resolution" value="2.30 A"/>
    <property type="chains" value="C=1-124"/>
</dbReference>
<dbReference type="PDB" id="1R3I">
    <property type="method" value="X-ray"/>
    <property type="resolution" value="2.40 A"/>
    <property type="chains" value="C=1-124"/>
</dbReference>
<dbReference type="PDB" id="1R3J">
    <property type="method" value="X-ray"/>
    <property type="resolution" value="1.90 A"/>
    <property type="chains" value="C=1-124"/>
</dbReference>
<dbReference type="PDB" id="1R3K">
    <property type="method" value="X-ray"/>
    <property type="resolution" value="2.80 A"/>
    <property type="chains" value="C=1-124"/>
</dbReference>
<dbReference type="PDB" id="1R3L">
    <property type="method" value="X-ray"/>
    <property type="resolution" value="2.41 A"/>
    <property type="chains" value="C=1-124"/>
</dbReference>
<dbReference type="PDB" id="1ZWI">
    <property type="method" value="X-ray"/>
    <property type="resolution" value="2.50 A"/>
    <property type="chains" value="C=22-123"/>
</dbReference>
<dbReference type="PDB" id="2A9H">
    <property type="method" value="NMR"/>
    <property type="chains" value="A/B/C/D=1-132"/>
</dbReference>
<dbReference type="PDB" id="2ATK">
    <property type="method" value="X-ray"/>
    <property type="resolution" value="2.50 A"/>
    <property type="chains" value="C=1-124"/>
</dbReference>
<dbReference type="PDB" id="2BOB">
    <property type="method" value="X-ray"/>
    <property type="resolution" value="2.76 A"/>
    <property type="chains" value="C=1-124"/>
</dbReference>
<dbReference type="PDB" id="2BOC">
    <property type="method" value="X-ray"/>
    <property type="resolution" value="3.01 A"/>
    <property type="chains" value="C=1-124"/>
</dbReference>
<dbReference type="PDB" id="2DWD">
    <property type="method" value="X-ray"/>
    <property type="resolution" value="2.60 A"/>
    <property type="chains" value="C=22-124"/>
</dbReference>
<dbReference type="PDB" id="2DWE">
    <property type="method" value="X-ray"/>
    <property type="resolution" value="2.50 A"/>
    <property type="chains" value="C=22-124"/>
</dbReference>
<dbReference type="PDB" id="2H8P">
    <property type="method" value="X-ray"/>
    <property type="resolution" value="2.25 A"/>
    <property type="chains" value="C=22-78, D=80-122"/>
</dbReference>
<dbReference type="PDB" id="2HG5">
    <property type="method" value="X-ray"/>
    <property type="resolution" value="2.75 A"/>
    <property type="chains" value="C=22-78, D=80-122"/>
</dbReference>
<dbReference type="PDB" id="2HJF">
    <property type="method" value="X-ray"/>
    <property type="resolution" value="2.90 A"/>
    <property type="chains" value="C=22-124"/>
</dbReference>
<dbReference type="PDB" id="2HVJ">
    <property type="method" value="X-ray"/>
    <property type="resolution" value="2.75 A"/>
    <property type="chains" value="C=1-124"/>
</dbReference>
<dbReference type="PDB" id="2HVK">
    <property type="method" value="X-ray"/>
    <property type="resolution" value="1.90 A"/>
    <property type="chains" value="C=1-124"/>
</dbReference>
<dbReference type="PDB" id="2IH1">
    <property type="method" value="X-ray"/>
    <property type="resolution" value="2.40 A"/>
    <property type="chains" value="C=3-122"/>
</dbReference>
<dbReference type="PDB" id="2IH3">
    <property type="method" value="X-ray"/>
    <property type="resolution" value="1.72 A"/>
    <property type="chains" value="C=3-122"/>
</dbReference>
<dbReference type="PDB" id="2ITC">
    <property type="method" value="X-ray"/>
    <property type="resolution" value="3.20 A"/>
    <property type="chains" value="C=1-124"/>
</dbReference>
<dbReference type="PDB" id="2ITD">
    <property type="method" value="X-ray"/>
    <property type="resolution" value="2.70 A"/>
    <property type="chains" value="C=1-124"/>
</dbReference>
<dbReference type="PDB" id="2JK5">
    <property type="method" value="X-ray"/>
    <property type="resolution" value="2.40 A"/>
    <property type="chains" value="C=1-124"/>
</dbReference>
<dbReference type="PDB" id="2NLJ">
    <property type="method" value="X-ray"/>
    <property type="resolution" value="2.52 A"/>
    <property type="chains" value="C=1-124"/>
</dbReference>
<dbReference type="PDB" id="2P7T">
    <property type="method" value="X-ray"/>
    <property type="resolution" value="2.05 A"/>
    <property type="chains" value="C=22-124"/>
</dbReference>
<dbReference type="PDB" id="2QTO">
    <property type="method" value="X-ray"/>
    <property type="resolution" value="3.20 A"/>
    <property type="chains" value="A/B/C/D=23-119"/>
</dbReference>
<dbReference type="PDB" id="2W0F">
    <property type="method" value="X-ray"/>
    <property type="resolution" value="2.40 A"/>
    <property type="chains" value="C=1-124"/>
</dbReference>
<dbReference type="PDB" id="3EFF">
    <property type="method" value="X-ray"/>
    <property type="resolution" value="3.80 A"/>
    <property type="chains" value="K/L/M/N=22-160"/>
</dbReference>
<dbReference type="PDB" id="3F5W">
    <property type="method" value="X-ray"/>
    <property type="resolution" value="3.30 A"/>
    <property type="chains" value="C=21-124"/>
</dbReference>
<dbReference type="PDB" id="3F7V">
    <property type="method" value="X-ray"/>
    <property type="resolution" value="3.20 A"/>
    <property type="chains" value="C=21-124"/>
</dbReference>
<dbReference type="PDB" id="3F7Y">
    <property type="method" value="X-ray"/>
    <property type="resolution" value="3.40 A"/>
    <property type="chains" value="C=21-124"/>
</dbReference>
<dbReference type="PDB" id="3FB5">
    <property type="method" value="X-ray"/>
    <property type="resolution" value="2.80 A"/>
    <property type="chains" value="C=21-124"/>
</dbReference>
<dbReference type="PDB" id="3FB6">
    <property type="method" value="X-ray"/>
    <property type="resolution" value="3.00 A"/>
    <property type="chains" value="C=21-124"/>
</dbReference>
<dbReference type="PDB" id="3FB7">
    <property type="method" value="X-ray"/>
    <property type="resolution" value="3.30 A"/>
    <property type="chains" value="C=21-124"/>
</dbReference>
<dbReference type="PDB" id="3FB8">
    <property type="method" value="X-ray"/>
    <property type="resolution" value="3.40 A"/>
    <property type="chains" value="C=21-124"/>
</dbReference>
<dbReference type="PDB" id="3GB7">
    <property type="method" value="X-ray"/>
    <property type="resolution" value="2.85 A"/>
    <property type="chains" value="C=1-124"/>
</dbReference>
<dbReference type="PDB" id="3HPL">
    <property type="method" value="X-ray"/>
    <property type="resolution" value="3.20 A"/>
    <property type="chains" value="C=1-124"/>
</dbReference>
<dbReference type="PDB" id="3IFX">
    <property type="method" value="Other"/>
    <property type="resolution" value="3.56 A"/>
    <property type="chains" value="A/B/C/D=1-123"/>
</dbReference>
<dbReference type="PDB" id="3IGA">
    <property type="method" value="X-ray"/>
    <property type="resolution" value="2.75 A"/>
    <property type="chains" value="C=1-124"/>
</dbReference>
<dbReference type="PDB" id="3OGC">
    <property type="method" value="X-ray"/>
    <property type="resolution" value="3.80 A"/>
    <property type="chains" value="C=2-124"/>
</dbReference>
<dbReference type="PDB" id="3OR6">
    <property type="method" value="X-ray"/>
    <property type="resolution" value="2.70 A"/>
    <property type="chains" value="C=22-124"/>
</dbReference>
<dbReference type="PDB" id="3OR7">
    <property type="method" value="X-ray"/>
    <property type="resolution" value="2.30 A"/>
    <property type="chains" value="C=22-124"/>
</dbReference>
<dbReference type="PDB" id="3PJS">
    <property type="method" value="X-ray"/>
    <property type="resolution" value="3.80 A"/>
    <property type="chains" value="K/L/M/N=22-160"/>
</dbReference>
<dbReference type="PDB" id="3STL">
    <property type="method" value="X-ray"/>
    <property type="resolution" value="2.40 A"/>
    <property type="chains" value="C=22-124"/>
</dbReference>
<dbReference type="PDB" id="3STZ">
    <property type="method" value="X-ray"/>
    <property type="resolution" value="2.50 A"/>
    <property type="chains" value="C=23-124"/>
</dbReference>
<dbReference type="PDB" id="4LBE">
    <property type="method" value="X-ray"/>
    <property type="resolution" value="2.75 A"/>
    <property type="chains" value="C=2-124"/>
</dbReference>
<dbReference type="PDB" id="4LCU">
    <property type="method" value="X-ray"/>
    <property type="resolution" value="2.75 A"/>
    <property type="chains" value="C=2-124"/>
</dbReference>
<dbReference type="PDB" id="4MSW">
    <property type="method" value="X-ray"/>
    <property type="resolution" value="2.06 A"/>
    <property type="chains" value="C=22-124"/>
</dbReference>
<dbReference type="PDB" id="4UUJ">
    <property type="method" value="X-ray"/>
    <property type="resolution" value="2.40 A"/>
    <property type="chains" value="C=22-124"/>
</dbReference>
<dbReference type="PDB" id="5E1A">
    <property type="method" value="X-ray"/>
    <property type="resolution" value="3.40 A"/>
    <property type="chains" value="C=4-124"/>
</dbReference>
<dbReference type="PDB" id="5EBL">
    <property type="method" value="X-ray"/>
    <property type="resolution" value="2.30 A"/>
    <property type="chains" value="C=1-125"/>
</dbReference>
<dbReference type="PDB" id="5EBM">
    <property type="method" value="X-ray"/>
    <property type="resolution" value="2.50 A"/>
    <property type="chains" value="C=1-125"/>
</dbReference>
<dbReference type="PDB" id="5EBW">
    <property type="method" value="X-ray"/>
    <property type="resolution" value="2.30 A"/>
    <property type="chains" value="C=1-123"/>
</dbReference>
<dbReference type="PDB" id="5EC1">
    <property type="method" value="X-ray"/>
    <property type="resolution" value="2.75 A"/>
    <property type="chains" value="C=1-125"/>
</dbReference>
<dbReference type="PDB" id="5EC2">
    <property type="method" value="X-ray"/>
    <property type="resolution" value="2.30 A"/>
    <property type="chains" value="C=1-125"/>
</dbReference>
<dbReference type="PDB" id="5J9P">
    <property type="method" value="X-ray"/>
    <property type="resolution" value="2.85 A"/>
    <property type="chains" value="C=22-117"/>
</dbReference>
<dbReference type="PDB" id="5VK6">
    <property type="method" value="X-ray"/>
    <property type="resolution" value="2.25 A"/>
    <property type="chains" value="C=26-121"/>
</dbReference>
<dbReference type="PDB" id="5VKE">
    <property type="method" value="X-ray"/>
    <property type="resolution" value="2.37 A"/>
    <property type="chains" value="C=26-121"/>
</dbReference>
<dbReference type="PDB" id="5VKH">
    <property type="method" value="X-ray"/>
    <property type="resolution" value="2.25 A"/>
    <property type="chains" value="C=22-124"/>
</dbReference>
<dbReference type="PDB" id="6NFU">
    <property type="method" value="X-ray"/>
    <property type="resolution" value="2.09 A"/>
    <property type="chains" value="C=22-124"/>
</dbReference>
<dbReference type="PDB" id="6NFV">
    <property type="method" value="X-ray"/>
    <property type="resolution" value="2.13 A"/>
    <property type="chains" value="C=22-124"/>
</dbReference>
<dbReference type="PDB" id="6PA0">
    <property type="method" value="X-ray"/>
    <property type="resolution" value="2.05 A"/>
    <property type="chains" value="C=22-124"/>
</dbReference>
<dbReference type="PDB" id="6W0A">
    <property type="method" value="X-ray"/>
    <property type="resolution" value="3.24 A"/>
    <property type="chains" value="C=28-120"/>
</dbReference>
<dbReference type="PDB" id="6W0B">
    <property type="method" value="X-ray"/>
    <property type="resolution" value="3.60 A"/>
    <property type="chains" value="C=28-120"/>
</dbReference>
<dbReference type="PDB" id="6W0C">
    <property type="method" value="X-ray"/>
    <property type="resolution" value="3.56 A"/>
    <property type="chains" value="C=28-120"/>
</dbReference>
<dbReference type="PDB" id="6W0D">
    <property type="method" value="X-ray"/>
    <property type="resolution" value="3.64 A"/>
    <property type="chains" value="C=28-120"/>
</dbReference>
<dbReference type="PDB" id="6W0E">
    <property type="method" value="X-ray"/>
    <property type="resolution" value="3.51 A"/>
    <property type="chains" value="C=28-120"/>
</dbReference>
<dbReference type="PDB" id="6W0F">
    <property type="method" value="X-ray"/>
    <property type="resolution" value="2.40 A"/>
    <property type="chains" value="C=22-124"/>
</dbReference>
<dbReference type="PDB" id="6W0G">
    <property type="method" value="X-ray"/>
    <property type="resolution" value="2.60 A"/>
    <property type="chains" value="C=22-124"/>
</dbReference>
<dbReference type="PDB" id="6W0H">
    <property type="method" value="X-ray"/>
    <property type="resolution" value="2.60 A"/>
    <property type="chains" value="C=22-124"/>
</dbReference>
<dbReference type="PDB" id="6W0I">
    <property type="method" value="X-ray"/>
    <property type="resolution" value="2.33 A"/>
    <property type="chains" value="C=22-124"/>
</dbReference>
<dbReference type="PDB" id="6W0J">
    <property type="method" value="X-ray"/>
    <property type="resolution" value="2.50 A"/>
    <property type="chains" value="C=22-124"/>
</dbReference>
<dbReference type="PDB" id="7M2I">
    <property type="method" value="X-ray"/>
    <property type="resolution" value="2.69 A"/>
    <property type="chains" value="C=26-116"/>
</dbReference>
<dbReference type="PDB" id="7M2J">
    <property type="method" value="X-ray"/>
    <property type="resolution" value="3.20 A"/>
    <property type="chains" value="C=26-116"/>
</dbReference>
<dbReference type="PDB" id="7MDJ">
    <property type="method" value="X-ray"/>
    <property type="resolution" value="2.75 A"/>
    <property type="chains" value="C=1-124"/>
</dbReference>
<dbReference type="PDB" id="7MHX">
    <property type="method" value="X-ray"/>
    <property type="resolution" value="2.85 A"/>
    <property type="chains" value="C=1-124"/>
</dbReference>
<dbReference type="PDB" id="7MJT">
    <property type="method" value="X-ray"/>
    <property type="resolution" value="3.30 A"/>
    <property type="chains" value="C=26-121"/>
</dbReference>
<dbReference type="PDB" id="7MK6">
    <property type="method" value="X-ray"/>
    <property type="resolution" value="3.10 A"/>
    <property type="chains" value="C=26-121"/>
</dbReference>
<dbReference type="PDB" id="7MUB">
    <property type="method" value="X-ray"/>
    <property type="resolution" value="3.00 A"/>
    <property type="chains" value="C=26-121"/>
</dbReference>
<dbReference type="PDB" id="7RP0">
    <property type="method" value="X-ray"/>
    <property type="resolution" value="2.48 A"/>
    <property type="chains" value="C=22-124"/>
</dbReference>
<dbReference type="PDB" id="8THN">
    <property type="method" value="X-ray"/>
    <property type="resolution" value="2.90 A"/>
    <property type="chains" value="C=22-124"/>
</dbReference>
<dbReference type="PDBsum" id="1BL8"/>
<dbReference type="PDBsum" id="1F6G"/>
<dbReference type="PDBsum" id="1J95"/>
<dbReference type="PDBsum" id="1JQ1"/>
<dbReference type="PDBsum" id="1JQ2"/>
<dbReference type="PDBsum" id="1JVM"/>
<dbReference type="PDBsum" id="1K4C"/>
<dbReference type="PDBsum" id="1K4D"/>
<dbReference type="PDBsum" id="1R3I"/>
<dbReference type="PDBsum" id="1R3J"/>
<dbReference type="PDBsum" id="1R3K"/>
<dbReference type="PDBsum" id="1R3L"/>
<dbReference type="PDBsum" id="1ZWI"/>
<dbReference type="PDBsum" id="2A9H"/>
<dbReference type="PDBsum" id="2ATK"/>
<dbReference type="PDBsum" id="2BOB"/>
<dbReference type="PDBsum" id="2BOC"/>
<dbReference type="PDBsum" id="2DWD"/>
<dbReference type="PDBsum" id="2DWE"/>
<dbReference type="PDBsum" id="2H8P"/>
<dbReference type="PDBsum" id="2HG5"/>
<dbReference type="PDBsum" id="2HJF"/>
<dbReference type="PDBsum" id="2HVJ"/>
<dbReference type="PDBsum" id="2HVK"/>
<dbReference type="PDBsum" id="2IH1"/>
<dbReference type="PDBsum" id="2IH3"/>
<dbReference type="PDBsum" id="2ITC"/>
<dbReference type="PDBsum" id="2ITD"/>
<dbReference type="PDBsum" id="2JK5"/>
<dbReference type="PDBsum" id="2NLJ"/>
<dbReference type="PDBsum" id="2P7T"/>
<dbReference type="PDBsum" id="2QTO"/>
<dbReference type="PDBsum" id="2W0F"/>
<dbReference type="PDBsum" id="3EFF"/>
<dbReference type="PDBsum" id="3F5W"/>
<dbReference type="PDBsum" id="3F7V"/>
<dbReference type="PDBsum" id="3F7Y"/>
<dbReference type="PDBsum" id="3FB5"/>
<dbReference type="PDBsum" id="3FB6"/>
<dbReference type="PDBsum" id="3FB7"/>
<dbReference type="PDBsum" id="3FB8"/>
<dbReference type="PDBsum" id="3GB7"/>
<dbReference type="PDBsum" id="3HPL"/>
<dbReference type="PDBsum" id="3IFX"/>
<dbReference type="PDBsum" id="3IGA"/>
<dbReference type="PDBsum" id="3OGC"/>
<dbReference type="PDBsum" id="3OR6"/>
<dbReference type="PDBsum" id="3OR7"/>
<dbReference type="PDBsum" id="3PJS"/>
<dbReference type="PDBsum" id="3STL"/>
<dbReference type="PDBsum" id="3STZ"/>
<dbReference type="PDBsum" id="4LBE"/>
<dbReference type="PDBsum" id="4LCU"/>
<dbReference type="PDBsum" id="4MSW"/>
<dbReference type="PDBsum" id="4UUJ"/>
<dbReference type="PDBsum" id="5E1A"/>
<dbReference type="PDBsum" id="5EBL"/>
<dbReference type="PDBsum" id="5EBM"/>
<dbReference type="PDBsum" id="5EBW"/>
<dbReference type="PDBsum" id="5EC1"/>
<dbReference type="PDBsum" id="5EC2"/>
<dbReference type="PDBsum" id="5J9P"/>
<dbReference type="PDBsum" id="5VK6"/>
<dbReference type="PDBsum" id="5VKE"/>
<dbReference type="PDBsum" id="5VKH"/>
<dbReference type="PDBsum" id="6NFU"/>
<dbReference type="PDBsum" id="6NFV"/>
<dbReference type="PDBsum" id="6PA0"/>
<dbReference type="PDBsum" id="6W0A"/>
<dbReference type="PDBsum" id="6W0B"/>
<dbReference type="PDBsum" id="6W0C"/>
<dbReference type="PDBsum" id="6W0D"/>
<dbReference type="PDBsum" id="6W0E"/>
<dbReference type="PDBsum" id="6W0F"/>
<dbReference type="PDBsum" id="6W0G"/>
<dbReference type="PDBsum" id="6W0H"/>
<dbReference type="PDBsum" id="6W0I"/>
<dbReference type="PDBsum" id="6W0J"/>
<dbReference type="PDBsum" id="7M2I"/>
<dbReference type="PDBsum" id="7M2J"/>
<dbReference type="PDBsum" id="7MDJ"/>
<dbReference type="PDBsum" id="7MHX"/>
<dbReference type="PDBsum" id="7MJT"/>
<dbReference type="PDBsum" id="7MK6"/>
<dbReference type="PDBsum" id="7MUB"/>
<dbReference type="PDBsum" id="7RP0"/>
<dbReference type="PDBsum" id="8THN"/>
<dbReference type="BMRB" id="P0A334"/>
<dbReference type="PCDDB" id="P0A334"/>
<dbReference type="SMR" id="P0A334"/>
<dbReference type="DIP" id="DIP-29626N"/>
<dbReference type="MINT" id="P0A334"/>
<dbReference type="DrugBank" id="DB07416">
    <property type="generic name" value="(2S)-2-(BUTYRYLOXY)-3-HYDROXYPROPYL NONANOATE"/>
</dbReference>
<dbReference type="DrugBank" id="DB01851">
    <property type="generic name" value="Tetrabutylammonium Ion"/>
</dbReference>
<dbReference type="DrugBank" id="DB08837">
    <property type="generic name" value="Tetraethylammonium"/>
</dbReference>
<dbReference type="TCDB" id="1.A.1.1.1">
    <property type="family name" value="the voltage-gated ion channel (vic) superfamily"/>
</dbReference>
<dbReference type="ABCD" id="P0A334">
    <property type="antibodies" value="4 sequenced antibodies"/>
</dbReference>
<dbReference type="EvolutionaryTrace" id="P0A334"/>
<dbReference type="GO" id="GO:0008076">
    <property type="term" value="C:voltage-gated potassium channel complex"/>
    <property type="evidence" value="ECO:0007669"/>
    <property type="project" value="InterPro"/>
</dbReference>
<dbReference type="GO" id="GO:0042802">
    <property type="term" value="F:identical protein binding"/>
    <property type="evidence" value="ECO:0000353"/>
    <property type="project" value="IntAct"/>
</dbReference>
<dbReference type="GO" id="GO:0005249">
    <property type="term" value="F:voltage-gated potassium channel activity"/>
    <property type="evidence" value="ECO:0007669"/>
    <property type="project" value="InterPro"/>
</dbReference>
<dbReference type="GO" id="GO:0001508">
    <property type="term" value="P:action potential"/>
    <property type="evidence" value="ECO:0007669"/>
    <property type="project" value="TreeGrafter"/>
</dbReference>
<dbReference type="FunFam" id="1.20.5.110:FF:000071">
    <property type="entry name" value="pH-gated potassium channel KcsA"/>
    <property type="match status" value="1"/>
</dbReference>
<dbReference type="Gene3D" id="1.10.287.70">
    <property type="match status" value="1"/>
</dbReference>
<dbReference type="Gene3D" id="1.20.5.110">
    <property type="match status" value="1"/>
</dbReference>
<dbReference type="Gene3D" id="1.20.5.440">
    <property type="entry name" value="ATP synthase delta/epsilon subunit, C-terminal domain"/>
    <property type="match status" value="1"/>
</dbReference>
<dbReference type="InterPro" id="IPR013099">
    <property type="entry name" value="K_chnl_dom"/>
</dbReference>
<dbReference type="InterPro" id="IPR028325">
    <property type="entry name" value="VG_K_chnl"/>
</dbReference>
<dbReference type="PANTHER" id="PTHR11537:SF254">
    <property type="entry name" value="POTASSIUM VOLTAGE-GATED CHANNEL PROTEIN SHAB"/>
    <property type="match status" value="1"/>
</dbReference>
<dbReference type="PANTHER" id="PTHR11537">
    <property type="entry name" value="VOLTAGE-GATED POTASSIUM CHANNEL"/>
    <property type="match status" value="1"/>
</dbReference>
<dbReference type="Pfam" id="PF07885">
    <property type="entry name" value="Ion_trans_2"/>
    <property type="match status" value="1"/>
</dbReference>
<dbReference type="PRINTS" id="PR00169">
    <property type="entry name" value="KCHANNEL"/>
</dbReference>
<dbReference type="SUPFAM" id="SSF81324">
    <property type="entry name" value="Voltage-gated potassium channels"/>
    <property type="match status" value="1"/>
</dbReference>
<organism>
    <name type="scientific">Streptomyces lividans</name>
    <dbReference type="NCBI Taxonomy" id="1916"/>
    <lineage>
        <taxon>Bacteria</taxon>
        <taxon>Bacillati</taxon>
        <taxon>Actinomycetota</taxon>
        <taxon>Actinomycetes</taxon>
        <taxon>Kitasatosporales</taxon>
        <taxon>Streptomycetaceae</taxon>
        <taxon>Streptomyces</taxon>
    </lineage>
</organism>